<dbReference type="EC" id="7.1.1.9"/>
<dbReference type="EMBL" id="X06960">
    <property type="protein sequence ID" value="CAA30031.1"/>
    <property type="status" value="ALT_INIT"/>
    <property type="molecule type" value="Genomic_DNA"/>
</dbReference>
<dbReference type="EMBL" id="J01390">
    <property type="protein sequence ID" value="AAA99207.1"/>
    <property type="status" value="ALT_INIT"/>
    <property type="molecule type" value="Genomic_DNA"/>
</dbReference>
<dbReference type="PIR" id="B93436">
    <property type="entry name" value="OTAS3"/>
</dbReference>
<dbReference type="SMR" id="P00421"/>
<dbReference type="GO" id="GO:0005743">
    <property type="term" value="C:mitochondrial inner membrane"/>
    <property type="evidence" value="ECO:0007669"/>
    <property type="project" value="UniProtKB-SubCell"/>
</dbReference>
<dbReference type="GO" id="GO:0004129">
    <property type="term" value="F:cytochrome-c oxidase activity"/>
    <property type="evidence" value="ECO:0007669"/>
    <property type="project" value="UniProtKB-EC"/>
</dbReference>
<dbReference type="GO" id="GO:0006123">
    <property type="term" value="P:mitochondrial electron transport, cytochrome c to oxygen"/>
    <property type="evidence" value="ECO:0007669"/>
    <property type="project" value="TreeGrafter"/>
</dbReference>
<dbReference type="CDD" id="cd01665">
    <property type="entry name" value="Cyt_c_Oxidase_III"/>
    <property type="match status" value="1"/>
</dbReference>
<dbReference type="FunFam" id="1.10.287.70:FF:000082">
    <property type="entry name" value="Cytochrome c oxidase subunit 3"/>
    <property type="match status" value="1"/>
</dbReference>
<dbReference type="FunFam" id="1.20.120.80:FF:000002">
    <property type="entry name" value="Cytochrome c oxidase subunit 3"/>
    <property type="match status" value="1"/>
</dbReference>
<dbReference type="Gene3D" id="1.10.287.70">
    <property type="match status" value="1"/>
</dbReference>
<dbReference type="Gene3D" id="1.20.120.80">
    <property type="entry name" value="Cytochrome c oxidase, subunit III, four-helix bundle"/>
    <property type="match status" value="1"/>
</dbReference>
<dbReference type="InterPro" id="IPR024791">
    <property type="entry name" value="Cyt_c/ubiquinol_Oxase_su3"/>
</dbReference>
<dbReference type="InterPro" id="IPR033945">
    <property type="entry name" value="Cyt_c_oxase_su3_dom"/>
</dbReference>
<dbReference type="InterPro" id="IPR000298">
    <property type="entry name" value="Cyt_c_oxidase-like_su3"/>
</dbReference>
<dbReference type="InterPro" id="IPR035973">
    <property type="entry name" value="Cyt_c_oxidase_su3-like_sf"/>
</dbReference>
<dbReference type="InterPro" id="IPR013833">
    <property type="entry name" value="Cyt_c_oxidase_su3_a-hlx"/>
</dbReference>
<dbReference type="PANTHER" id="PTHR11403:SF7">
    <property type="entry name" value="CYTOCHROME C OXIDASE SUBUNIT 3"/>
    <property type="match status" value="1"/>
</dbReference>
<dbReference type="PANTHER" id="PTHR11403">
    <property type="entry name" value="CYTOCHROME C OXIDASE SUBUNIT III"/>
    <property type="match status" value="1"/>
</dbReference>
<dbReference type="Pfam" id="PF00510">
    <property type="entry name" value="COX3"/>
    <property type="match status" value="1"/>
</dbReference>
<dbReference type="SUPFAM" id="SSF81452">
    <property type="entry name" value="Cytochrome c oxidase subunit III-like"/>
    <property type="match status" value="1"/>
</dbReference>
<dbReference type="PROSITE" id="PS50253">
    <property type="entry name" value="COX3"/>
    <property type="match status" value="1"/>
</dbReference>
<reference key="1">
    <citation type="journal article" date="1982" name="Nucleic Acids Res.">
        <title>Nucleotide sequence of Aspergillus nidulans mitochondrial genes coding for ATPase subunit 6, cytochrome oxidase subunit 3, seven unidentified proteins, four tRNAs and L-rRNA.</title>
        <authorList>
            <person name="Netzker R."/>
            <person name="Koechel H.G."/>
            <person name="Basak N."/>
            <person name="Kuentzel H."/>
        </authorList>
    </citation>
    <scope>NUCLEOTIDE SEQUENCE [GENOMIC DNA]</scope>
    <source>
        <strain>pabaA1 biA1</strain>
    </source>
</reference>
<reference key="2">
    <citation type="submission" date="1984-03" db="PIR data bank">
        <authorList>
            <person name="Lazarus C.M."/>
            <person name="Kuentzel H."/>
        </authorList>
    </citation>
    <scope>SEQUENCE REVISION TO 11; 19; 123 AND 249</scope>
</reference>
<reference key="3">
    <citation type="journal article" date="1992" name="J. Mol. Evol.">
        <title>Genetic code and phylogenetic origin of oomycetous mitochondria.</title>
        <authorList>
            <person name="Karlovsky P."/>
            <person name="Fartmann B."/>
        </authorList>
    </citation>
    <scope>NUCLEOTIDE SEQUENCE [GENOMIC DNA]</scope>
</reference>
<name>COX3_EMEND</name>
<accession>P00421</accession>
<feature type="chain" id="PRO_0000183771" description="Cytochrome c oxidase subunit 3">
    <location>
        <begin position="1"/>
        <end position="269"/>
    </location>
</feature>
<feature type="transmembrane region" description="Helical" evidence="2">
    <location>
        <begin position="24"/>
        <end position="44"/>
    </location>
</feature>
<feature type="transmembrane region" description="Helical" evidence="2">
    <location>
        <begin position="46"/>
        <end position="66"/>
    </location>
</feature>
<feature type="transmembrane region" description="Helical" evidence="2">
    <location>
        <begin position="90"/>
        <end position="110"/>
    </location>
</feature>
<feature type="transmembrane region" description="Helical" evidence="2">
    <location>
        <begin position="138"/>
        <end position="160"/>
    </location>
</feature>
<feature type="transmembrane region" description="Helical" evidence="2">
    <location>
        <begin position="167"/>
        <end position="187"/>
    </location>
</feature>
<feature type="transmembrane region" description="Helical" evidence="2">
    <location>
        <begin position="207"/>
        <end position="227"/>
    </location>
</feature>
<feature type="transmembrane region" description="Helical" evidence="2">
    <location>
        <begin position="247"/>
        <end position="267"/>
    </location>
</feature>
<feature type="sequence conflict" description="In Ref. 3; AAA99207." evidence="3" ref="3">
    <original>N</original>
    <variation>Y</variation>
    <location>
        <position position="88"/>
    </location>
</feature>
<gene>
    <name type="primary">cox3</name>
    <name type="synonym">oxiC</name>
</gene>
<proteinExistence type="inferred from homology"/>
<keyword id="KW-0472">Membrane</keyword>
<keyword id="KW-0496">Mitochondrion</keyword>
<keyword id="KW-0999">Mitochondrion inner membrane</keyword>
<keyword id="KW-1278">Translocase</keyword>
<keyword id="KW-0812">Transmembrane</keyword>
<keyword id="KW-1133">Transmembrane helix</keyword>
<comment type="function">
    <text evidence="1">Component of the cytochrome c oxidase, the last enzyme in the mitochondrial electron transport chain which drives oxidative phosphorylation. The respiratory chain contains 3 multisubunit complexes succinate dehydrogenase (complex II, CII), ubiquinol-cytochrome c oxidoreductase (cytochrome b-c1 complex, complex III, CIII) and cytochrome c oxidase (complex IV, CIV), that cooperate to transfer electrons derived from NADH and succinate to molecular oxygen, creating an electrochemical gradient over the inner membrane that drives transmembrane transport and the ATP synthase. Cytochrome c oxidase is the component of the respiratory chain that catalyzes the reduction of oxygen to water. Electrons originating from reduced cytochrome c in the intermembrane space (IMS) are transferred via the dinuclear copper A center (CU(A)) of subunit 2 and heme A of subunit 1 to the active site in subunit 1, a binuclear center (BNC) formed by heme A3 and copper B (CU(B)). The BNC reduces molecular oxygen to 2 water molecules using 4 electrons from cytochrome c in the IMS and 4 protons from the mitochondrial matrix.</text>
</comment>
<comment type="catalytic activity">
    <reaction evidence="1">
        <text>4 Fe(II)-[cytochrome c] + O2 + 8 H(+)(in) = 4 Fe(III)-[cytochrome c] + 2 H2O + 4 H(+)(out)</text>
        <dbReference type="Rhea" id="RHEA:11436"/>
        <dbReference type="Rhea" id="RHEA-COMP:10350"/>
        <dbReference type="Rhea" id="RHEA-COMP:14399"/>
        <dbReference type="ChEBI" id="CHEBI:15377"/>
        <dbReference type="ChEBI" id="CHEBI:15378"/>
        <dbReference type="ChEBI" id="CHEBI:15379"/>
        <dbReference type="ChEBI" id="CHEBI:29033"/>
        <dbReference type="ChEBI" id="CHEBI:29034"/>
        <dbReference type="EC" id="7.1.1.9"/>
    </reaction>
    <physiologicalReaction direction="left-to-right" evidence="1">
        <dbReference type="Rhea" id="RHEA:11437"/>
    </physiologicalReaction>
</comment>
<comment type="subunit">
    <text evidence="1">Component of the cytochrome c oxidase (complex IV, CIV), a multisubunit enzyme composed of a catalytic core of 3 subunits and several supernumerary subunits. The complex exists as a monomer or a dimer and forms supercomplexes (SCs) in the inner mitochondrial membrane with ubiquinol-cytochrome c oxidoreductase (cytochrome b-c1 complex, complex III, CIII).</text>
</comment>
<comment type="subcellular location">
    <subcellularLocation>
        <location evidence="1">Mitochondrion inner membrane</location>
        <topology evidence="1">Multi-pass membrane protein</topology>
    </subcellularLocation>
</comment>
<comment type="similarity">
    <text evidence="3">Belongs to the cytochrome c oxidase subunit 3 family.</text>
</comment>
<comment type="sequence caution" evidence="3">
    <conflict type="erroneous initiation">
        <sequence resource="EMBL-CDS" id="AAA99207"/>
    </conflict>
</comment>
<comment type="sequence caution" evidence="3">
    <conflict type="erroneous initiation">
        <sequence resource="EMBL-CDS" id="CAA30031"/>
    </conflict>
</comment>
<sequence>MIYQSKRNFQNHPFHLVSPSPWPLFTSISLFILTTATVLFMHGFEGFQYLVPVAVINVMYVMGLWFRDVISEGTYLGNHTNAVQKGLNLGVGLFIISEVFFFLAIFWAFFHSAISPSVELGAQWPPLGIQGINPFELPLLNTIILLSSGVTITYAHHSLIQGNRKGALYGTVVTILLAIVFTFFQGVEYTVSSFTISDSVYGSCFYFGTGFHGLHVIIGTAFLAVGLWRLAAYHLTDHHHLGYESGILYWHFVDVVWLFLYISVYYWGY</sequence>
<geneLocation type="mitochondrion"/>
<protein>
    <recommendedName>
        <fullName>Cytochrome c oxidase subunit 3</fullName>
        <ecNumber>7.1.1.9</ecNumber>
    </recommendedName>
    <alternativeName>
        <fullName>Cytochrome c oxidase polypeptide III</fullName>
    </alternativeName>
</protein>
<evidence type="ECO:0000250" key="1">
    <source>
        <dbReference type="UniProtKB" id="P00420"/>
    </source>
</evidence>
<evidence type="ECO:0000255" key="2"/>
<evidence type="ECO:0000305" key="3"/>
<organism>
    <name type="scientific">Emericella nidulans</name>
    <name type="common">Aspergillus nidulans</name>
    <dbReference type="NCBI Taxonomy" id="162425"/>
    <lineage>
        <taxon>Eukaryota</taxon>
        <taxon>Fungi</taxon>
        <taxon>Dikarya</taxon>
        <taxon>Ascomycota</taxon>
        <taxon>Pezizomycotina</taxon>
        <taxon>Eurotiomycetes</taxon>
        <taxon>Eurotiomycetidae</taxon>
        <taxon>Eurotiales</taxon>
        <taxon>Aspergillaceae</taxon>
        <taxon>Aspergillus</taxon>
        <taxon>Aspergillus subgen. Nidulantes</taxon>
    </lineage>
</organism>